<name>NDUBB_PANTR</name>
<dbReference type="EMBL" id="DQ885639">
    <property type="protein sequence ID" value="ABH12148.1"/>
    <property type="molecule type" value="mRNA"/>
</dbReference>
<dbReference type="RefSeq" id="NP_001065278.1">
    <property type="nucleotide sequence ID" value="NM_001071810.1"/>
</dbReference>
<dbReference type="RefSeq" id="XP_016798227.1">
    <property type="nucleotide sequence ID" value="XM_016942738.1"/>
</dbReference>
<dbReference type="SMR" id="Q0MQJ5"/>
<dbReference type="FunCoup" id="Q0MQJ5">
    <property type="interactions" value="999"/>
</dbReference>
<dbReference type="STRING" id="9598.ENSPTRP00000037483"/>
<dbReference type="PaxDb" id="9598-ENSPTRP00000037483"/>
<dbReference type="GeneID" id="473588"/>
<dbReference type="KEGG" id="ptr:473588"/>
<dbReference type="CTD" id="54539"/>
<dbReference type="eggNOG" id="KOG4808">
    <property type="taxonomic scope" value="Eukaryota"/>
</dbReference>
<dbReference type="HOGENOM" id="CLU_109862_0_0_1"/>
<dbReference type="InParanoid" id="Q0MQJ5"/>
<dbReference type="OrthoDB" id="13655at9604"/>
<dbReference type="TreeFam" id="TF314671"/>
<dbReference type="Proteomes" id="UP000002277">
    <property type="component" value="Unplaced"/>
</dbReference>
<dbReference type="GO" id="GO:0005743">
    <property type="term" value="C:mitochondrial inner membrane"/>
    <property type="evidence" value="ECO:0007669"/>
    <property type="project" value="UniProtKB-SubCell"/>
</dbReference>
<dbReference type="GO" id="GO:0045271">
    <property type="term" value="C:respiratory chain complex I"/>
    <property type="evidence" value="ECO:0000250"/>
    <property type="project" value="UniProtKB"/>
</dbReference>
<dbReference type="InterPro" id="IPR019329">
    <property type="entry name" value="NADH_UbQ_OxRdtase_ESSS_su"/>
</dbReference>
<dbReference type="PANTHER" id="PTHR13327:SF0">
    <property type="entry name" value="NADH DEHYDROGENASE [UBIQUINONE] 1 BETA SUBCOMPLEX SUBUNIT 11, MITOCHONDRIAL"/>
    <property type="match status" value="1"/>
</dbReference>
<dbReference type="PANTHER" id="PTHR13327">
    <property type="entry name" value="NADH-UBIQUINONE OXIDOREDUCTASE ESSS SUBUNIT, MITOCHONDRIAL PRECURSOR"/>
    <property type="match status" value="1"/>
</dbReference>
<dbReference type="Pfam" id="PF10183">
    <property type="entry name" value="ESSS"/>
    <property type="match status" value="1"/>
</dbReference>
<reference key="1">
    <citation type="journal article" date="2006" name="Gene">
        <title>Adaptive selection of mitochondrial complex I subunits during primate radiation.</title>
        <authorList>
            <person name="Mishmar D."/>
            <person name="Ruiz-Pesini E."/>
            <person name="Mondragon-Palomino M."/>
            <person name="Procaccio V."/>
            <person name="Gaut B."/>
            <person name="Wallace D.C."/>
        </authorList>
    </citation>
    <scope>NUCLEOTIDE SEQUENCE [MRNA]</scope>
</reference>
<sequence>MAAGLFGLSARLLLAAAATRGLPAARVRWESSFSRTVVAPSAVAGKRPPEPTTQWQEDPEPEDENLYEKNPDSHGYDKDPVLDVWNMRLVFFFGVSIILVLGSTFVAYLPDYRMKEWSRREAERLVKYREANGLPIMESNCFDPSKIQLPEDE</sequence>
<feature type="transit peptide" description="Mitochondrion" evidence="1">
    <location>
        <begin position="1"/>
        <end position="29"/>
    </location>
</feature>
<feature type="chain" id="PRO_0000251846" description="NADH dehydrogenase [ubiquinone] 1 beta subcomplex subunit 11, mitochondrial">
    <location>
        <begin position="30"/>
        <end position="153"/>
    </location>
</feature>
<feature type="transmembrane region" description="Helical" evidence="3">
    <location>
        <begin position="89"/>
        <end position="109"/>
    </location>
</feature>
<feature type="region of interest" description="Disordered" evidence="4">
    <location>
        <begin position="40"/>
        <end position="77"/>
    </location>
</feature>
<feature type="compositionally biased region" description="Basic and acidic residues" evidence="4">
    <location>
        <begin position="66"/>
        <end position="77"/>
    </location>
</feature>
<proteinExistence type="evidence at transcript level"/>
<organism>
    <name type="scientific">Pan troglodytes</name>
    <name type="common">Chimpanzee</name>
    <dbReference type="NCBI Taxonomy" id="9598"/>
    <lineage>
        <taxon>Eukaryota</taxon>
        <taxon>Metazoa</taxon>
        <taxon>Chordata</taxon>
        <taxon>Craniata</taxon>
        <taxon>Vertebrata</taxon>
        <taxon>Euteleostomi</taxon>
        <taxon>Mammalia</taxon>
        <taxon>Eutheria</taxon>
        <taxon>Euarchontoglires</taxon>
        <taxon>Primates</taxon>
        <taxon>Haplorrhini</taxon>
        <taxon>Catarrhini</taxon>
        <taxon>Hominidae</taxon>
        <taxon>Pan</taxon>
    </lineage>
</organism>
<accession>Q0MQJ5</accession>
<gene>
    <name type="primary">NDUFB11</name>
</gene>
<evidence type="ECO:0000250" key="1"/>
<evidence type="ECO:0000250" key="2">
    <source>
        <dbReference type="UniProtKB" id="Q9NX14"/>
    </source>
</evidence>
<evidence type="ECO:0000255" key="3"/>
<evidence type="ECO:0000256" key="4">
    <source>
        <dbReference type="SAM" id="MobiDB-lite"/>
    </source>
</evidence>
<evidence type="ECO:0000305" key="5"/>
<keyword id="KW-0249">Electron transport</keyword>
<keyword id="KW-0472">Membrane</keyword>
<keyword id="KW-0496">Mitochondrion</keyword>
<keyword id="KW-0999">Mitochondrion inner membrane</keyword>
<keyword id="KW-1185">Reference proteome</keyword>
<keyword id="KW-0679">Respiratory chain</keyword>
<keyword id="KW-0809">Transit peptide</keyword>
<keyword id="KW-0812">Transmembrane</keyword>
<keyword id="KW-1133">Transmembrane helix</keyword>
<keyword id="KW-0813">Transport</keyword>
<comment type="function">
    <text evidence="2">Accessory subunit of the mitochondrial membrane respiratory chain NADH dehydrogenase (Complex I), that is believed not to be involved in catalysis. Complex I functions in the transfer of electrons from NADH to the respiratory chain. The immediate electron acceptor for the enzyme is believed to be ubiquinone.</text>
</comment>
<comment type="subunit">
    <text evidence="2">Complex I is composed of 45 different subunits. Interacts with BCAP31.</text>
</comment>
<comment type="subcellular location">
    <subcellularLocation>
        <location evidence="2">Mitochondrion inner membrane</location>
        <topology evidence="2">Single-pass membrane protein</topology>
    </subcellularLocation>
    <text evidence="2">The interaction with BCAP31 mediates mitochondria localization.</text>
</comment>
<comment type="similarity">
    <text evidence="5">Belongs to the complex I NDUFB11 subunit family.</text>
</comment>
<protein>
    <recommendedName>
        <fullName>NADH dehydrogenase [ubiquinone] 1 beta subcomplex subunit 11, mitochondrial</fullName>
    </recommendedName>
    <alternativeName>
        <fullName>Complex I-ESSS</fullName>
        <shortName>CI-ESSS</shortName>
    </alternativeName>
    <alternativeName>
        <fullName>NADH-ubiquinone oxidoreductase ESSS subunit</fullName>
    </alternativeName>
</protein>